<feature type="chain" id="PRO_1000211720" description="D-aminoacyl-tRNA deacylase">
    <location>
        <begin position="1"/>
        <end position="141"/>
    </location>
</feature>
<feature type="short sequence motif" description="Gly-cisPro motif, important for rejection of L-amino acids" evidence="1">
    <location>
        <begin position="133"/>
        <end position="134"/>
    </location>
</feature>
<comment type="function">
    <text evidence="1">An aminoacyl-tRNA editing enzyme that deacylates mischarged D-aminoacyl-tRNAs. Also deacylates mischarged glycyl-tRNA(Ala), protecting cells against glycine mischarging by AlaRS. Acts via tRNA-based rather than protein-based catalysis; rejects L-amino acids rather than detecting D-amino acids in the active site. By recycling D-aminoacyl-tRNA to D-amino acids and free tRNA molecules, this enzyme counteracts the toxicity associated with the formation of D-aminoacyl-tRNA entities in vivo and helps enforce protein L-homochirality.</text>
</comment>
<comment type="catalytic activity">
    <reaction evidence="1">
        <text>glycyl-tRNA(Ala) + H2O = tRNA(Ala) + glycine + H(+)</text>
        <dbReference type="Rhea" id="RHEA:53744"/>
        <dbReference type="Rhea" id="RHEA-COMP:9657"/>
        <dbReference type="Rhea" id="RHEA-COMP:13640"/>
        <dbReference type="ChEBI" id="CHEBI:15377"/>
        <dbReference type="ChEBI" id="CHEBI:15378"/>
        <dbReference type="ChEBI" id="CHEBI:57305"/>
        <dbReference type="ChEBI" id="CHEBI:78442"/>
        <dbReference type="ChEBI" id="CHEBI:78522"/>
        <dbReference type="EC" id="3.1.1.96"/>
    </reaction>
</comment>
<comment type="catalytic activity">
    <reaction evidence="1">
        <text>a D-aminoacyl-tRNA + H2O = a tRNA + a D-alpha-amino acid + H(+)</text>
        <dbReference type="Rhea" id="RHEA:13953"/>
        <dbReference type="Rhea" id="RHEA-COMP:10123"/>
        <dbReference type="Rhea" id="RHEA-COMP:10124"/>
        <dbReference type="ChEBI" id="CHEBI:15377"/>
        <dbReference type="ChEBI" id="CHEBI:15378"/>
        <dbReference type="ChEBI" id="CHEBI:59871"/>
        <dbReference type="ChEBI" id="CHEBI:78442"/>
        <dbReference type="ChEBI" id="CHEBI:79333"/>
        <dbReference type="EC" id="3.1.1.96"/>
    </reaction>
</comment>
<comment type="subunit">
    <text evidence="1">Homodimer.</text>
</comment>
<comment type="subcellular location">
    <subcellularLocation>
        <location evidence="1">Cytoplasm</location>
    </subcellularLocation>
</comment>
<comment type="domain">
    <text evidence="1">A Gly-cisPro motif from one monomer fits into the active site of the other monomer to allow specific chiral rejection of L-amino acids.</text>
</comment>
<comment type="similarity">
    <text evidence="1">Belongs to the DTD family.</text>
</comment>
<sequence>MRVVLQRVSRARVLVDGQVVGEVSGEGLVAFVGVTPGDGAGEVALLARKIAELRVLRDERSVLDAGAGVLVVSQFTLYADTRKGRRPTWSAAAPRPVAEPVVDALVEALRERGVVVATGVFGADMAVELTNDGPVTILLEA</sequence>
<reference key="1">
    <citation type="journal article" date="2009" name="Stand. Genomic Sci.">
        <title>Complete genome sequence of Beutenbergia cavernae type strain (HKI 0122).</title>
        <authorList>
            <person name="Land M."/>
            <person name="Pukall R."/>
            <person name="Abt B."/>
            <person name="Goker M."/>
            <person name="Rohde M."/>
            <person name="Glavina Del Rio T."/>
            <person name="Tice H."/>
            <person name="Copeland A."/>
            <person name="Cheng J.F."/>
            <person name="Lucas S."/>
            <person name="Chen F."/>
            <person name="Nolan M."/>
            <person name="Bruce D."/>
            <person name="Goodwin L."/>
            <person name="Pitluck S."/>
            <person name="Ivanova N."/>
            <person name="Mavromatis K."/>
            <person name="Ovchinnikova G."/>
            <person name="Pati A."/>
            <person name="Chen A."/>
            <person name="Palaniappan K."/>
            <person name="Hauser L."/>
            <person name="Chang Y.J."/>
            <person name="Jefferies C.C."/>
            <person name="Saunders E."/>
            <person name="Brettin T."/>
            <person name="Detter J.C."/>
            <person name="Han C."/>
            <person name="Chain P."/>
            <person name="Bristow J."/>
            <person name="Eisen J.A."/>
            <person name="Markowitz V."/>
            <person name="Hugenholtz P."/>
            <person name="Kyrpides N.C."/>
            <person name="Klenk H.P."/>
            <person name="Lapidus A."/>
        </authorList>
    </citation>
    <scope>NUCLEOTIDE SEQUENCE [LARGE SCALE GENOMIC DNA]</scope>
    <source>
        <strain>ATCC BAA-8 / DSM 12333 / CCUG 43141 / JCM 11478 / NBRC 16432 / NCIMB 13614 / HKI 0122</strain>
    </source>
</reference>
<name>DTD_BEUC1</name>
<keyword id="KW-0963">Cytoplasm</keyword>
<keyword id="KW-0378">Hydrolase</keyword>
<keyword id="KW-1185">Reference proteome</keyword>
<keyword id="KW-0694">RNA-binding</keyword>
<keyword id="KW-0820">tRNA-binding</keyword>
<protein>
    <recommendedName>
        <fullName evidence="1">D-aminoacyl-tRNA deacylase</fullName>
        <shortName evidence="1">DTD</shortName>
        <ecNumber evidence="1">3.1.1.96</ecNumber>
    </recommendedName>
    <alternativeName>
        <fullName evidence="1">Gly-tRNA(Ala) deacylase</fullName>
    </alternativeName>
</protein>
<gene>
    <name evidence="1" type="primary">dtd</name>
    <name type="ordered locus">Bcav_3409</name>
</gene>
<proteinExistence type="inferred from homology"/>
<organism>
    <name type="scientific">Beutenbergia cavernae (strain ATCC BAA-8 / DSM 12333 / CCUG 43141 / JCM 11478 / NBRC 16432 / NCIMB 13614 / HKI 0122)</name>
    <dbReference type="NCBI Taxonomy" id="471853"/>
    <lineage>
        <taxon>Bacteria</taxon>
        <taxon>Bacillati</taxon>
        <taxon>Actinomycetota</taxon>
        <taxon>Actinomycetes</taxon>
        <taxon>Micrococcales</taxon>
        <taxon>Beutenbergiaceae</taxon>
        <taxon>Beutenbergia</taxon>
    </lineage>
</organism>
<accession>C5C226</accession>
<dbReference type="EC" id="3.1.1.96" evidence="1"/>
<dbReference type="EMBL" id="CP001618">
    <property type="protein sequence ID" value="ACQ81651.1"/>
    <property type="molecule type" value="Genomic_DNA"/>
</dbReference>
<dbReference type="RefSeq" id="WP_015883888.1">
    <property type="nucleotide sequence ID" value="NC_012669.1"/>
</dbReference>
<dbReference type="SMR" id="C5C226"/>
<dbReference type="STRING" id="471853.Bcav_3409"/>
<dbReference type="KEGG" id="bcv:Bcav_3409"/>
<dbReference type="eggNOG" id="COG1490">
    <property type="taxonomic scope" value="Bacteria"/>
</dbReference>
<dbReference type="HOGENOM" id="CLU_076901_1_2_11"/>
<dbReference type="OrthoDB" id="9801395at2"/>
<dbReference type="Proteomes" id="UP000007962">
    <property type="component" value="Chromosome"/>
</dbReference>
<dbReference type="GO" id="GO:0005737">
    <property type="term" value="C:cytoplasm"/>
    <property type="evidence" value="ECO:0007669"/>
    <property type="project" value="UniProtKB-SubCell"/>
</dbReference>
<dbReference type="GO" id="GO:0051500">
    <property type="term" value="F:D-tyrosyl-tRNA(Tyr) deacylase activity"/>
    <property type="evidence" value="ECO:0007669"/>
    <property type="project" value="TreeGrafter"/>
</dbReference>
<dbReference type="GO" id="GO:0106026">
    <property type="term" value="F:Gly-tRNA(Ala) deacylase activity"/>
    <property type="evidence" value="ECO:0007669"/>
    <property type="project" value="UniProtKB-UniRule"/>
</dbReference>
<dbReference type="GO" id="GO:0043908">
    <property type="term" value="F:Ser(Gly)-tRNA(Ala) hydrolase activity"/>
    <property type="evidence" value="ECO:0007669"/>
    <property type="project" value="UniProtKB-UniRule"/>
</dbReference>
<dbReference type="GO" id="GO:0000049">
    <property type="term" value="F:tRNA binding"/>
    <property type="evidence" value="ECO:0007669"/>
    <property type="project" value="UniProtKB-UniRule"/>
</dbReference>
<dbReference type="GO" id="GO:0019478">
    <property type="term" value="P:D-amino acid catabolic process"/>
    <property type="evidence" value="ECO:0007669"/>
    <property type="project" value="UniProtKB-UniRule"/>
</dbReference>
<dbReference type="FunFam" id="3.50.80.10:FF:000001">
    <property type="entry name" value="D-aminoacyl-tRNA deacylase"/>
    <property type="match status" value="1"/>
</dbReference>
<dbReference type="Gene3D" id="3.50.80.10">
    <property type="entry name" value="D-tyrosyl-tRNA(Tyr) deacylase"/>
    <property type="match status" value="1"/>
</dbReference>
<dbReference type="HAMAP" id="MF_00518">
    <property type="entry name" value="Deacylase_Dtd"/>
    <property type="match status" value="1"/>
</dbReference>
<dbReference type="InterPro" id="IPR003732">
    <property type="entry name" value="Daa-tRNA_deacyls_DTD"/>
</dbReference>
<dbReference type="InterPro" id="IPR023509">
    <property type="entry name" value="DTD-like_sf"/>
</dbReference>
<dbReference type="NCBIfam" id="TIGR00256">
    <property type="entry name" value="D-aminoacyl-tRNA deacylase"/>
    <property type="match status" value="1"/>
</dbReference>
<dbReference type="PANTHER" id="PTHR10472:SF5">
    <property type="entry name" value="D-AMINOACYL-TRNA DEACYLASE 1"/>
    <property type="match status" value="1"/>
</dbReference>
<dbReference type="PANTHER" id="PTHR10472">
    <property type="entry name" value="D-TYROSYL-TRNA TYR DEACYLASE"/>
    <property type="match status" value="1"/>
</dbReference>
<dbReference type="Pfam" id="PF02580">
    <property type="entry name" value="Tyr_Deacylase"/>
    <property type="match status" value="1"/>
</dbReference>
<dbReference type="SUPFAM" id="SSF69500">
    <property type="entry name" value="DTD-like"/>
    <property type="match status" value="1"/>
</dbReference>
<evidence type="ECO:0000255" key="1">
    <source>
        <dbReference type="HAMAP-Rule" id="MF_00518"/>
    </source>
</evidence>